<evidence type="ECO:0000250" key="1"/>
<evidence type="ECO:0000250" key="2">
    <source>
        <dbReference type="UniProtKB" id="Q86X29"/>
    </source>
</evidence>
<evidence type="ECO:0000250" key="3">
    <source>
        <dbReference type="UniProtKB" id="Q99KG5"/>
    </source>
</evidence>
<evidence type="ECO:0000255" key="4"/>
<evidence type="ECO:0000255" key="5">
    <source>
        <dbReference type="PROSITE-ProRule" id="PRU00114"/>
    </source>
</evidence>
<evidence type="ECO:0000256" key="6">
    <source>
        <dbReference type="SAM" id="MobiDB-lite"/>
    </source>
</evidence>
<evidence type="ECO:0000269" key="7">
    <source>
    </source>
</evidence>
<evidence type="ECO:0000303" key="8">
    <source>
    </source>
</evidence>
<evidence type="ECO:0000303" key="9">
    <source>
    </source>
</evidence>
<evidence type="ECO:0000305" key="10"/>
<evidence type="ECO:0000312" key="11">
    <source>
        <dbReference type="RGD" id="69236"/>
    </source>
</evidence>
<evidence type="ECO:0007744" key="12">
    <source>
    </source>
</evidence>
<organism>
    <name type="scientific">Rattus norvegicus</name>
    <name type="common">Rat</name>
    <dbReference type="NCBI Taxonomy" id="10116"/>
    <lineage>
        <taxon>Eukaryota</taxon>
        <taxon>Metazoa</taxon>
        <taxon>Chordata</taxon>
        <taxon>Craniata</taxon>
        <taxon>Vertebrata</taxon>
        <taxon>Euteleostomi</taxon>
        <taxon>Mammalia</taxon>
        <taxon>Eutheria</taxon>
        <taxon>Euarchontoglires</taxon>
        <taxon>Glires</taxon>
        <taxon>Rodentia</taxon>
        <taxon>Myomorpha</taxon>
        <taxon>Muroidea</taxon>
        <taxon>Muridae</taxon>
        <taxon>Murinae</taxon>
        <taxon>Rattus</taxon>
    </lineage>
</organism>
<proteinExistence type="evidence at protein level"/>
<sequence>MAPAAGACAGAPDSHPATVVFVCLFLIIFCPDPASAIQVTVSDPYHVVILFQPVTLPCTYQMSNTLTVPIVIWKYKSFCRDRIADAFSPASVDNQLNAQLAAGNPGYNPYVECQDSVRTVRVVATKQGNAVTLGDYYQGRRITITGNADLTFEQTAWGDSGVYYCSVVSAQDLDGNNEAYAELIVLGRTSEAPELLPGFRAGPLEDWLFVVVVCLASLLLFLLLGICWCQCCPHTCCCYVRCPCCPDKCCCPEALYAAGKAATSGVPSIYAPSIYTHLSPAKTPPPPPAMIPMGPPYGYPGDFDRHSSVGGHSSQVPLLRDVDGSVSSEVRSGYRIQANQQDDSMRVLYYMEKELANFDPSRPGPPNGRVERAMSEVTSLHEDDWRSRPSRAPALTPIRDEEWNRHSPQSPRTWEQEPLQEQPRGGWGSGRPRARSVDALDDINRPGSTESGRSSPPSSGRRGRAYAPPRSRSRDDLYDPDDPRDLPHSRDPHYYDDIRSRDPRADPRSRQRSRDPRDAGFRSRDPQYDGRLLEEALKKKGSGERRRVYREEEEEEEGQYPPAPPPYSETDSQASRERRLKKNLALSRESLVV</sequence>
<comment type="function">
    <text evidence="3 7">Probable role in the clearance of triglyceride-rich lipoprotein from blood. Binds chylomicrons, LDL and VLDL in presence of free fatty acids and allows their subsequent uptake in the cells (PubMed:10224102). Maintains epithelial barrier function by recruiting MARVELD2/tricellulin to tricellular tight junctions (By similarity).</text>
</comment>
<comment type="subunit">
    <text evidence="1 3 7">Homotrimer or homotetramer constituted of isoform 1 and/or isoform 2 and isoform 3 (PubMed:10224102). Assembles into cell-cell contacts. Interacts (via the cytoplasmic domain) with MARVELD2 (via C-terminal cytoplasmic domain); the interaction is required to recruit MARVELD2 to tricellular contacts. Interacts with OCLN (By similarity).</text>
</comment>
<comment type="subcellular location">
    <subcellularLocation>
        <location evidence="3">Cell membrane</location>
        <topology evidence="4">Single-pass type I membrane protein</topology>
    </subcellularLocation>
    <subcellularLocation>
        <location evidence="3">Cell junction</location>
        <location evidence="3">Tight junction</location>
    </subcellularLocation>
    <text evidence="3">Located at tricellular contacts.</text>
</comment>
<comment type="alternative products">
    <event type="alternative splicing"/>
    <isoform>
        <id>Q9WU74-1</id>
        <name>1</name>
        <name>alpha</name>
        <sequence type="displayed"/>
    </isoform>
    <isoform>
        <id>Q9WU74-2</id>
        <name>2</name>
        <name>alpha'</name>
        <sequence type="described" ref="VSP_019698"/>
    </isoform>
    <isoform>
        <id>Q9WU74-3</id>
        <name>3</name>
        <name>beta</name>
        <sequence type="described" ref="VSP_019697"/>
    </isoform>
</comment>
<comment type="tissue specificity">
    <text evidence="7">Specifically expressed in liver. Also detected in kidney and lung.</text>
</comment>
<comment type="PTM">
    <text evidence="3">Phosphorylation at Ser-308 by MAPK8/JNK1 and MAPK9/JNK2 may be required for exclusive localization at tricellular tight junstions.</text>
</comment>
<comment type="PTM">
    <text evidence="2">Polyubiquitinated at Lys-582 via 'Lys-63'-linked ubiquitin chains; deubiquitinated by USP53.</text>
</comment>
<comment type="similarity">
    <text evidence="10">Belongs to the immunoglobulin superfamily. LISCH7 family.</text>
</comment>
<accession>Q9WU74</accession>
<accession>Q497B9</accession>
<accession>Q9WU75</accession>
<accession>Q9WU76</accession>
<protein>
    <recommendedName>
        <fullName evidence="10">Lipolysis-stimulated lipoprotein receptor</fullName>
    </recommendedName>
    <alternativeName>
        <fullName>Lipolysis-stimulated remnant receptor</fullName>
    </alternativeName>
</protein>
<feature type="signal peptide" evidence="4">
    <location>
        <begin position="1"/>
        <end position="35"/>
    </location>
</feature>
<feature type="chain" id="PRO_0000245310" description="Lipolysis-stimulated lipoprotein receptor">
    <location>
        <begin position="36"/>
        <end position="593"/>
    </location>
</feature>
<feature type="topological domain" description="Extracellular" evidence="4">
    <location>
        <begin position="36"/>
        <end position="206"/>
    </location>
</feature>
<feature type="transmembrane region" description="Helical" evidence="4">
    <location>
        <begin position="207"/>
        <end position="227"/>
    </location>
</feature>
<feature type="topological domain" description="Cytoplasmic" evidence="4">
    <location>
        <begin position="228"/>
        <end position="593"/>
    </location>
</feature>
<feature type="domain" description="Ig-like V-type">
    <location>
        <begin position="89"/>
        <end position="181"/>
    </location>
</feature>
<feature type="region of interest" description="Disordered" evidence="6">
    <location>
        <begin position="375"/>
        <end position="578"/>
    </location>
</feature>
<feature type="compositionally biased region" description="Basic and acidic residues" evidence="6">
    <location>
        <begin position="375"/>
        <end position="387"/>
    </location>
</feature>
<feature type="compositionally biased region" description="Basic and acidic residues" evidence="6">
    <location>
        <begin position="435"/>
        <end position="444"/>
    </location>
</feature>
<feature type="compositionally biased region" description="Low complexity" evidence="6">
    <location>
        <begin position="445"/>
        <end position="460"/>
    </location>
</feature>
<feature type="compositionally biased region" description="Basic and acidic residues" evidence="6">
    <location>
        <begin position="472"/>
        <end position="550"/>
    </location>
</feature>
<feature type="modified residue" description="Phosphothreonine" evidence="12">
    <location>
        <position position="283"/>
    </location>
</feature>
<feature type="modified residue" description="Phosphoserine" evidence="2">
    <location>
        <position position="308"/>
    </location>
</feature>
<feature type="modified residue" description="Phosphoserine" evidence="2">
    <location>
        <position position="314"/>
    </location>
</feature>
<feature type="modified residue" description="Phosphoserine" evidence="2">
    <location>
        <position position="332"/>
    </location>
</feature>
<feature type="modified residue" description="Phosphoserine" evidence="2">
    <location>
        <position position="375"/>
    </location>
</feature>
<feature type="modified residue" description="Phosphoserine" evidence="2">
    <location>
        <position position="379"/>
    </location>
</feature>
<feature type="modified residue" description="Phosphothreonine" evidence="2">
    <location>
        <position position="396"/>
    </location>
</feature>
<feature type="modified residue" description="Phosphoserine" evidence="12">
    <location>
        <position position="407"/>
    </location>
</feature>
<feature type="modified residue" description="Phosphoserine" evidence="2">
    <location>
        <position position="410"/>
    </location>
</feature>
<feature type="modified residue" description="Phosphoserine" evidence="12">
    <location>
        <position position="436"/>
    </location>
</feature>
<feature type="modified residue" description="Phosphoserine" evidence="2">
    <location>
        <position position="471"/>
    </location>
</feature>
<feature type="modified residue" description="Phosphoserine" evidence="12">
    <location>
        <position position="473"/>
    </location>
</feature>
<feature type="modified residue" description="Phosphotyrosine" evidence="2">
    <location>
        <position position="478"/>
    </location>
</feature>
<feature type="modified residue" description="Phosphoserine" evidence="2">
    <location>
        <position position="575"/>
    </location>
</feature>
<feature type="modified residue" description="Phosphoserine" evidence="2">
    <location>
        <position position="587"/>
    </location>
</feature>
<feature type="modified residue" description="Phosphoserine" evidence="2">
    <location>
        <position position="590"/>
    </location>
</feature>
<feature type="disulfide bond" evidence="5">
    <location>
        <begin position="113"/>
        <end position="165"/>
    </location>
</feature>
<feature type="cross-link" description="Glycyl lysine isopeptide (Lys-Gly) (interchain with G-Cter in ubiquitin)" evidence="2">
    <location>
        <position position="582"/>
    </location>
</feature>
<feature type="splice variant" id="VSP_019697" description="In isoform 3." evidence="8">
    <original>GRTSEAPELLPGFRAGPLEDWLFVVVVCLASLLLFLLLGICWCQCCPHTCCCYVRCPCCPDKCCCPEAL</original>
    <variation>V</variation>
    <location>
        <begin position="187"/>
        <end position="255"/>
    </location>
</feature>
<feature type="splice variant" id="VSP_019698" description="In isoform 2." evidence="8 9">
    <location>
        <begin position="187"/>
        <end position="205"/>
    </location>
</feature>
<feature type="sequence conflict" description="In Ref. 2; AAI00627." evidence="10" ref="2">
    <original>D</original>
    <variation>E</variation>
    <location>
        <position position="481"/>
    </location>
</feature>
<dbReference type="EMBL" id="AF119667">
    <property type="protein sequence ID" value="AAD30028.1"/>
    <property type="molecule type" value="mRNA"/>
</dbReference>
<dbReference type="EMBL" id="AF119668">
    <property type="protein sequence ID" value="AAD30029.1"/>
    <property type="molecule type" value="mRNA"/>
</dbReference>
<dbReference type="EMBL" id="AF119669">
    <property type="protein sequence ID" value="AAD30030.1"/>
    <property type="molecule type" value="mRNA"/>
</dbReference>
<dbReference type="EMBL" id="BC100626">
    <property type="protein sequence ID" value="AAI00627.1"/>
    <property type="molecule type" value="mRNA"/>
</dbReference>
<dbReference type="RefSeq" id="NP_116005.1">
    <molecule id="Q9WU74-1"/>
    <property type="nucleotide sequence ID" value="NM_032616.2"/>
</dbReference>
<dbReference type="RefSeq" id="XP_006228906.1">
    <molecule id="Q9WU74-2"/>
    <property type="nucleotide sequence ID" value="XM_006228844.5"/>
</dbReference>
<dbReference type="RefSeq" id="XP_006228907.1">
    <molecule id="Q9WU74-3"/>
    <property type="nucleotide sequence ID" value="XM_006228845.5"/>
</dbReference>
<dbReference type="FunCoup" id="Q9WU74">
    <property type="interactions" value="249"/>
</dbReference>
<dbReference type="IntAct" id="Q9WU74">
    <property type="interactions" value="1"/>
</dbReference>
<dbReference type="MINT" id="Q9WU74"/>
<dbReference type="STRING" id="10116.ENSRNOP00000041379"/>
<dbReference type="iPTMnet" id="Q9WU74"/>
<dbReference type="PhosphoSitePlus" id="Q9WU74"/>
<dbReference type="PaxDb" id="10116-ENSRNOP00000041379"/>
<dbReference type="Ensembl" id="ENSRNOT00000028585.8">
    <molecule id="Q9WU74-2"/>
    <property type="protein sequence ID" value="ENSRNOP00000028585.3"/>
    <property type="gene ID" value="ENSRNOG00000021053.9"/>
</dbReference>
<dbReference type="Ensembl" id="ENSRNOT00000044678.6">
    <molecule id="Q9WU74-1"/>
    <property type="protein sequence ID" value="ENSRNOP00000041379.2"/>
    <property type="gene ID" value="ENSRNOG00000021053.9"/>
</dbReference>
<dbReference type="Ensembl" id="ENSRNOT00000116572.1">
    <molecule id="Q9WU74-3"/>
    <property type="protein sequence ID" value="ENSRNOP00000097477.1"/>
    <property type="gene ID" value="ENSRNOG00000021053.9"/>
</dbReference>
<dbReference type="GeneID" id="64355"/>
<dbReference type="KEGG" id="rno:64355"/>
<dbReference type="UCSC" id="RGD:69236">
    <molecule id="Q9WU74-1"/>
    <property type="organism name" value="rat"/>
</dbReference>
<dbReference type="AGR" id="RGD:69236"/>
<dbReference type="CTD" id="51599"/>
<dbReference type="RGD" id="69236">
    <property type="gene designation" value="Lsr"/>
</dbReference>
<dbReference type="eggNOG" id="ENOG502QWP5">
    <property type="taxonomic scope" value="Eukaryota"/>
</dbReference>
<dbReference type="GeneTree" id="ENSGT00950000183058"/>
<dbReference type="HOGENOM" id="CLU_028969_2_0_1"/>
<dbReference type="InParanoid" id="Q9WU74"/>
<dbReference type="OMA" id="DWLFVVM"/>
<dbReference type="OrthoDB" id="9450321at2759"/>
<dbReference type="PhylomeDB" id="Q9WU74"/>
<dbReference type="TreeFam" id="TF330877"/>
<dbReference type="PRO" id="PR:Q9WU74"/>
<dbReference type="Proteomes" id="UP000002494">
    <property type="component" value="Chromosome 1"/>
</dbReference>
<dbReference type="Bgee" id="ENSRNOG00000021053">
    <property type="expression patterns" value="Expressed in stomach and 19 other cell types or tissues"/>
</dbReference>
<dbReference type="GO" id="GO:0005923">
    <property type="term" value="C:bicellular tight junction"/>
    <property type="evidence" value="ECO:0007669"/>
    <property type="project" value="UniProtKB-SubCell"/>
</dbReference>
<dbReference type="GO" id="GO:0042627">
    <property type="term" value="C:chylomicron"/>
    <property type="evidence" value="ECO:0007669"/>
    <property type="project" value="UniProtKB-KW"/>
</dbReference>
<dbReference type="GO" id="GO:0034362">
    <property type="term" value="C:low-density lipoprotein particle"/>
    <property type="evidence" value="ECO:0007669"/>
    <property type="project" value="UniProtKB-KW"/>
</dbReference>
<dbReference type="GO" id="GO:0005886">
    <property type="term" value="C:plasma membrane"/>
    <property type="evidence" value="ECO:0000250"/>
    <property type="project" value="HGNC"/>
</dbReference>
<dbReference type="GO" id="GO:0070160">
    <property type="term" value="C:tight junction"/>
    <property type="evidence" value="ECO:0000250"/>
    <property type="project" value="UniProtKB"/>
</dbReference>
<dbReference type="GO" id="GO:0061689">
    <property type="term" value="C:tricellular tight junction"/>
    <property type="evidence" value="ECO:0000266"/>
    <property type="project" value="RGD"/>
</dbReference>
<dbReference type="GO" id="GO:0034361">
    <property type="term" value="C:very-low-density lipoprotein particle"/>
    <property type="evidence" value="ECO:0007669"/>
    <property type="project" value="UniProtKB-KW"/>
</dbReference>
<dbReference type="GO" id="GO:0005504">
    <property type="term" value="F:fatty acid binding"/>
    <property type="evidence" value="ECO:0000304"/>
    <property type="project" value="HGNC-UCL"/>
</dbReference>
<dbReference type="GO" id="GO:0017129">
    <property type="term" value="F:triglyceride binding"/>
    <property type="evidence" value="ECO:0000304"/>
    <property type="project" value="HGNC-UCL"/>
</dbReference>
<dbReference type="GO" id="GO:0010669">
    <property type="term" value="P:epithelial structure maintenance"/>
    <property type="evidence" value="ECO:0000250"/>
    <property type="project" value="UniProtKB"/>
</dbReference>
<dbReference type="GO" id="GO:0060856">
    <property type="term" value="P:establishment of blood-brain barrier"/>
    <property type="evidence" value="ECO:0000266"/>
    <property type="project" value="RGD"/>
</dbReference>
<dbReference type="GO" id="GO:0061436">
    <property type="term" value="P:establishment of skin barrier"/>
    <property type="evidence" value="ECO:0000266"/>
    <property type="project" value="RGD"/>
</dbReference>
<dbReference type="GO" id="GO:0001889">
    <property type="term" value="P:liver development"/>
    <property type="evidence" value="ECO:0000250"/>
    <property type="project" value="HGNC"/>
</dbReference>
<dbReference type="GO" id="GO:0061833">
    <property type="term" value="P:protein localization to tricellular tight junction"/>
    <property type="evidence" value="ECO:0000266"/>
    <property type="project" value="RGD"/>
</dbReference>
<dbReference type="GO" id="GO:0019216">
    <property type="term" value="P:regulation of lipid metabolic process"/>
    <property type="evidence" value="ECO:0000314"/>
    <property type="project" value="RGD"/>
</dbReference>
<dbReference type="GO" id="GO:1904274">
    <property type="term" value="P:tricellular tight junction assembly"/>
    <property type="evidence" value="ECO:0000266"/>
    <property type="project" value="RGD"/>
</dbReference>
<dbReference type="Gene3D" id="2.60.40.10">
    <property type="entry name" value="Immunoglobulins"/>
    <property type="match status" value="1"/>
</dbReference>
<dbReference type="InterPro" id="IPR036179">
    <property type="entry name" value="Ig-like_dom_sf"/>
</dbReference>
<dbReference type="InterPro" id="IPR051874">
    <property type="entry name" value="Ig-like_domain-LISCH7"/>
</dbReference>
<dbReference type="InterPro" id="IPR013783">
    <property type="entry name" value="Ig-like_fold"/>
</dbReference>
<dbReference type="InterPro" id="IPR003599">
    <property type="entry name" value="Ig_sub"/>
</dbReference>
<dbReference type="InterPro" id="IPR008664">
    <property type="entry name" value="LISCH7"/>
</dbReference>
<dbReference type="PANTHER" id="PTHR15923:SF1">
    <property type="entry name" value="LIPOLYSIS-STIMULATED LIPOPROTEIN RECEPTOR"/>
    <property type="match status" value="1"/>
</dbReference>
<dbReference type="PANTHER" id="PTHR15923">
    <property type="entry name" value="TRANSMEMBRANE AND IMMUNOGLOBULIN DOMAIN-CONTAINING PROTEIN"/>
    <property type="match status" value="1"/>
</dbReference>
<dbReference type="Pfam" id="PF05624">
    <property type="entry name" value="LSR"/>
    <property type="match status" value="1"/>
</dbReference>
<dbReference type="SMART" id="SM00409">
    <property type="entry name" value="IG"/>
    <property type="match status" value="1"/>
</dbReference>
<dbReference type="SUPFAM" id="SSF48726">
    <property type="entry name" value="Immunoglobulin"/>
    <property type="match status" value="1"/>
</dbReference>
<name>LSR_RAT</name>
<keyword id="KW-0025">Alternative splicing</keyword>
<keyword id="KW-0965">Cell junction</keyword>
<keyword id="KW-1003">Cell membrane</keyword>
<keyword id="KW-0162">Chylomicron</keyword>
<keyword id="KW-1015">Disulfide bond</keyword>
<keyword id="KW-0393">Immunoglobulin domain</keyword>
<keyword id="KW-1017">Isopeptide bond</keyword>
<keyword id="KW-0427">LDL</keyword>
<keyword id="KW-0472">Membrane</keyword>
<keyword id="KW-0597">Phosphoprotein</keyword>
<keyword id="KW-0675">Receptor</keyword>
<keyword id="KW-1185">Reference proteome</keyword>
<keyword id="KW-0732">Signal</keyword>
<keyword id="KW-0796">Tight junction</keyword>
<keyword id="KW-0812">Transmembrane</keyword>
<keyword id="KW-1133">Transmembrane helix</keyword>
<keyword id="KW-0832">Ubl conjugation</keyword>
<keyword id="KW-0850">VLDL</keyword>
<reference key="1">
    <citation type="journal article" date="1999" name="J. Biol. Chem.">
        <title>Molecular cloning of a lipolysis-stimulated remnant receptor expressed in the liver.</title>
        <authorList>
            <person name="Yen F.T."/>
            <person name="Masson M."/>
            <person name="Clossais-Besnard N."/>
            <person name="Andre P."/>
            <person name="Grosset J.-M."/>
            <person name="Bougueleret L."/>
            <person name="Dumas J.-B."/>
            <person name="Guerassimenko O."/>
            <person name="Bihain B.E."/>
        </authorList>
    </citation>
    <scope>NUCLEOTIDE SEQUENCE [MRNA] (ISOFORMS 1; 2 AND 3)</scope>
    <scope>FUNCTION</scope>
    <scope>TISSUE SPECIFICITY</scope>
    <scope>SUBCELLULAR LOCATION</scope>
    <scope>SUBUNIT</scope>
    <source>
        <strain>Sprague-Dawley</strain>
        <tissue>Liver</tissue>
    </source>
</reference>
<reference key="2">
    <citation type="journal article" date="2004" name="Genome Res.">
        <title>The status, quality, and expansion of the NIH full-length cDNA project: the Mammalian Gene Collection (MGC).</title>
        <authorList>
            <consortium name="The MGC Project Team"/>
        </authorList>
    </citation>
    <scope>NUCLEOTIDE SEQUENCE [LARGE SCALE MRNA] (ISOFORM 2)</scope>
    <source>
        <tissue>Prostate</tissue>
    </source>
</reference>
<reference key="3">
    <citation type="journal article" date="2012" name="Nat. Commun.">
        <title>Quantitative maps of protein phosphorylation sites across 14 different rat organs and tissues.</title>
        <authorList>
            <person name="Lundby A."/>
            <person name="Secher A."/>
            <person name="Lage K."/>
            <person name="Nordsborg N.B."/>
            <person name="Dmytriyev A."/>
            <person name="Lundby C."/>
            <person name="Olsen J.V."/>
        </authorList>
    </citation>
    <scope>PHOSPHORYLATION [LARGE SCALE ANALYSIS] AT THR-283; SER-407; SER-436 AND SER-473</scope>
    <scope>IDENTIFICATION BY MASS SPECTROMETRY [LARGE SCALE ANALYSIS]</scope>
</reference>
<gene>
    <name evidence="11" type="primary">Lsr</name>
    <name type="synonym">Lisch7</name>
</gene>